<proteinExistence type="evidence at protein level"/>
<accession>P08078</accession>
<comment type="function">
    <text>Catalyzes two non-consecutive transamidination reactions. It converts scyllo-inosamine 4-phosphate into N-amidino-scyllo-inosamine 4-phosphate and N1-amidinostreptamine 6-phosphate into streptidine 6-phosphate.</text>
</comment>
<comment type="catalytic activity">
    <reaction>
        <text>1-amino-1-deoxy-scyllo-inositol 4-phosphate + L-arginine = 1-guanidino-1-deoxy-scyllo-inositol 4-phosphate + L-ornithine</text>
        <dbReference type="Rhea" id="RHEA:13265"/>
        <dbReference type="ChEBI" id="CHEBI:32682"/>
        <dbReference type="ChEBI" id="CHEBI:46911"/>
        <dbReference type="ChEBI" id="CHEBI:57656"/>
        <dbReference type="ChEBI" id="CHEBI:58325"/>
        <dbReference type="EC" id="2.1.4.2"/>
    </reaction>
</comment>
<comment type="pathway">
    <text>Antibiotic biosynthesis; streptomycin biosynthesis.</text>
</comment>
<comment type="subunit">
    <text>Homodimer.</text>
</comment>
<comment type="similarity">
    <text evidence="3">Belongs to the amidinotransferase family.</text>
</comment>
<keyword id="KW-0002">3D-structure</keyword>
<keyword id="KW-0045">Antibiotic biosynthesis</keyword>
<keyword id="KW-0903">Direct protein sequencing</keyword>
<keyword id="KW-0759">Streptomycin biosynthesis</keyword>
<keyword id="KW-0808">Transferase</keyword>
<protein>
    <recommendedName>
        <fullName>Inosamine-phosphate amidinotransferase 1</fullName>
        <ecNumber>2.1.4.2</ecNumber>
    </recommendedName>
    <alternativeName>
        <fullName>Aminocyclitol amidinotransferase</fullName>
        <shortName>ADT</shortName>
    </alternativeName>
    <alternativeName>
        <fullName>Inosamine-phosphate amidinotransferase I</fullName>
    </alternativeName>
</protein>
<dbReference type="EC" id="2.1.4.2"/>
<dbReference type="EMBL" id="Y00459">
    <property type="protein sequence ID" value="CAA68517.1"/>
    <property type="molecule type" value="Genomic_DNA"/>
</dbReference>
<dbReference type="EMBL" id="X05045">
    <property type="protein sequence ID" value="CAA28718.1"/>
    <property type="molecule type" value="Genomic_DNA"/>
</dbReference>
<dbReference type="PIR" id="B26984">
    <property type="entry name" value="B26984"/>
</dbReference>
<dbReference type="PDB" id="1BWD">
    <property type="method" value="X-ray"/>
    <property type="resolution" value="3.10 A"/>
    <property type="chains" value="A/B=2-347"/>
</dbReference>
<dbReference type="PDBsum" id="1BWD"/>
<dbReference type="SMR" id="P08078"/>
<dbReference type="BioCyc" id="MetaCyc:MONOMER-14013"/>
<dbReference type="BRENDA" id="2.1.4.2">
    <property type="organism ID" value="6035"/>
</dbReference>
<dbReference type="UniPathway" id="UPA00066"/>
<dbReference type="EvolutionaryTrace" id="P08078"/>
<dbReference type="GO" id="GO:0015068">
    <property type="term" value="F:glycine amidinotransferase activity"/>
    <property type="evidence" value="ECO:0007669"/>
    <property type="project" value="TreeGrafter"/>
</dbReference>
<dbReference type="GO" id="GO:0015069">
    <property type="term" value="F:scyllo-inosamine-4-phosphate amidinotransferase activity"/>
    <property type="evidence" value="ECO:0007669"/>
    <property type="project" value="UniProtKB-EC"/>
</dbReference>
<dbReference type="GO" id="GO:0006601">
    <property type="term" value="P:creatine biosynthetic process"/>
    <property type="evidence" value="ECO:0007669"/>
    <property type="project" value="TreeGrafter"/>
</dbReference>
<dbReference type="GO" id="GO:0019872">
    <property type="term" value="P:streptomycin biosynthetic process"/>
    <property type="evidence" value="ECO:0007669"/>
    <property type="project" value="UniProtKB-UniPathway"/>
</dbReference>
<dbReference type="CDD" id="cd21135">
    <property type="entry name" value="amidinotransferase_StrB1-like"/>
    <property type="match status" value="1"/>
</dbReference>
<dbReference type="Gene3D" id="3.75.10.10">
    <property type="entry name" value="L-arginine/glycine Amidinotransferase, Chain A"/>
    <property type="match status" value="1"/>
</dbReference>
<dbReference type="InterPro" id="IPR033195">
    <property type="entry name" value="AmidinoTrfase"/>
</dbReference>
<dbReference type="PANTHER" id="PTHR10488">
    <property type="entry name" value="GLYCINE AMIDINOTRANSFERASE, MITOCHONDRIAL"/>
    <property type="match status" value="1"/>
</dbReference>
<dbReference type="PANTHER" id="PTHR10488:SF1">
    <property type="entry name" value="GLYCINE AMIDINOTRANSFERASE, MITOCHONDRIAL"/>
    <property type="match status" value="1"/>
</dbReference>
<dbReference type="SUPFAM" id="SSF55909">
    <property type="entry name" value="Pentein"/>
    <property type="match status" value="1"/>
</dbReference>
<gene>
    <name type="primary">strB1</name>
    <name type="synonym">AT</name>
    <name type="synonym">strB</name>
</gene>
<reference key="1">
    <citation type="journal article" date="1987" name="Nucleic Acids Res.">
        <title>Gene cluster for streptomycin biosynthesis in Streptomyces griseus: nucleotide sequence of three genes and analysis of transcriptional activity.</title>
        <authorList>
            <person name="Distler J."/>
            <person name="Ebert A."/>
            <person name="Mansouri K."/>
            <person name="Pissowotzki K."/>
            <person name="Stockmann M."/>
            <person name="Piepersberg W."/>
        </authorList>
    </citation>
    <scope>NUCLEOTIDE SEQUENCE [GENOMIC DNA]</scope>
    <source>
        <strain>N2-3-11</strain>
    </source>
</reference>
<reference key="2">
    <citation type="journal article" date="1987" name="Nucleic Acids Res.">
        <title>Nucleotide sequence of the streptomycinphosphotransferase and amidinotransferase genes from Streptomyces griseus.</title>
        <authorList>
            <person name="Tohyama H."/>
            <person name="Okami Y."/>
            <person name="Umezawa H."/>
        </authorList>
    </citation>
    <scope>NUCLEOTIDE SEQUENCE [GENOMIC DNA]</scope>
    <scope>PROTEIN SEQUENCE OF 2-15</scope>
    <source>
        <strain>ATCC 23345 / DSM 40236 / JCM 4644 / NBRC 12875 / NCIMB 13023 / NRRL B-2682 / VKM Ac-800 / IMRU 3463</strain>
    </source>
</reference>
<reference key="3">
    <citation type="journal article" date="1991" name="Mol. Gen. Genet.">
        <title>Genetics of streptomycin production in Streptomyces griseus: nucleotide sequence of five genes, strFGHIK, including a phosphatase gene.</title>
        <authorList>
            <person name="Mansouri K."/>
            <person name="Piepersberg W."/>
        </authorList>
    </citation>
    <scope>NUCLEOTIDE SEQUENCE [GENOMIC DNA] OF 330-347</scope>
</reference>
<reference key="4">
    <citation type="journal article" date="1998" name="Biochemistry">
        <title>Crystal structure of L-arginine:inosamine-phosphate amidinotransferase StrB1 from Streptomyces griseus: an enzyme involved in streptomycin biosynthesis.</title>
        <authorList>
            <person name="Fritsche E."/>
            <person name="Bergner A."/>
            <person name="Humm A."/>
            <person name="Piepersberg W."/>
            <person name="Huber R."/>
        </authorList>
    </citation>
    <scope>X-RAY CRYSTALLOGRAPHY (3.1 ANGSTROMS)</scope>
</reference>
<sequence length="347" mass="38656">MSLVSVHNEWDPLEEVIVGTAVGARVPTADRSVFAVEYAGDYESQEQIPSGAYPDRVLKETEEELHVLAAELTKLGVTVRRPGPRDHSALIKTPDWETDGFHDYCPRDGLLSVGQTIIETPMALRSRFLESLAYKDLLLEYFASGSRWLSAPKPRLTDDSYAPQAPAGERLTDEEPVFDAANVLRFGTDLLYLVSDSGNELGAKWLQSAVGDTYTVHPCRKLYASTHVDSTIVPLRPGLVLTNPSRVNDENMPDFLRSWENITCPELVDIGFTGDKPHCSVWIGMNLLVVRPDLAVVDRRQTALIRLLEKHGMNVLPLQLTHSRTLGGGFHCATLDVRRTARETYQF</sequence>
<feature type="initiator methionine" description="Removed" evidence="2">
    <location>
        <position position="1"/>
    </location>
</feature>
<feature type="chain" id="PRO_0000215475" description="Inosamine-phosphate amidinotransferase 1">
    <location>
        <begin position="2"/>
        <end position="347"/>
    </location>
</feature>
<feature type="active site" evidence="1">
    <location>
        <position position="179"/>
    </location>
</feature>
<feature type="active site">
    <location>
        <position position="227"/>
    </location>
</feature>
<feature type="active site" description="Amidino-cysteine intermediate">
    <location>
        <position position="332"/>
    </location>
</feature>
<feature type="sequence variant" description="In strain: ISP 5236.">
    <original>SGS</original>
    <variation>ERI</variation>
    <location>
        <begin position="144"/>
        <end position="146"/>
    </location>
</feature>
<feature type="sequence variant" description="In strain: ISP 5236.">
    <original>G</original>
    <variation>R</variation>
    <location>
        <position position="329"/>
    </location>
</feature>
<feature type="sequence variant" description="In strain: ISP 5236.">
    <original>TAR</original>
    <variation>RPL</variation>
    <location>
        <begin position="340"/>
        <end position="342"/>
    </location>
</feature>
<feature type="strand" evidence="4">
    <location>
        <begin position="8"/>
        <end position="11"/>
    </location>
</feature>
<feature type="strand" evidence="4">
    <location>
        <begin position="13"/>
        <end position="17"/>
    </location>
</feature>
<feature type="helix" evidence="4">
    <location>
        <begin position="31"/>
        <end position="36"/>
    </location>
</feature>
<feature type="turn" evidence="4">
    <location>
        <begin position="37"/>
        <end position="41"/>
    </location>
</feature>
<feature type="helix" evidence="4">
    <location>
        <begin position="45"/>
        <end position="47"/>
    </location>
</feature>
<feature type="helix" evidence="4">
    <location>
        <begin position="55"/>
        <end position="74"/>
    </location>
</feature>
<feature type="strand" evidence="4">
    <location>
        <begin position="78"/>
        <end position="80"/>
    </location>
</feature>
<feature type="strand" evidence="4">
    <location>
        <begin position="87"/>
        <end position="89"/>
    </location>
</feature>
<feature type="helix" evidence="4">
    <location>
        <begin position="106"/>
        <end position="108"/>
    </location>
</feature>
<feature type="strand" evidence="4">
    <location>
        <begin position="109"/>
        <end position="119"/>
    </location>
</feature>
<feature type="helix" evidence="4">
    <location>
        <begin position="125"/>
        <end position="127"/>
    </location>
</feature>
<feature type="helix" evidence="4">
    <location>
        <begin position="130"/>
        <end position="134"/>
    </location>
</feature>
<feature type="helix" evidence="4">
    <location>
        <begin position="135"/>
        <end position="142"/>
    </location>
</feature>
<feature type="turn" evidence="4">
    <location>
        <begin position="143"/>
        <end position="145"/>
    </location>
</feature>
<feature type="strand" evidence="4">
    <location>
        <begin position="147"/>
        <end position="150"/>
    </location>
</feature>
<feature type="helix" evidence="4">
    <location>
        <begin position="158"/>
        <end position="160"/>
    </location>
</feature>
<feature type="strand" evidence="4">
    <location>
        <begin position="173"/>
        <end position="175"/>
    </location>
</feature>
<feature type="helix" evidence="4">
    <location>
        <begin position="180"/>
        <end position="182"/>
    </location>
</feature>
<feature type="strand" evidence="4">
    <location>
        <begin position="183"/>
        <end position="186"/>
    </location>
</feature>
<feature type="strand" evidence="4">
    <location>
        <begin position="189"/>
        <end position="193"/>
    </location>
</feature>
<feature type="helix" evidence="4">
    <location>
        <begin position="200"/>
        <end position="210"/>
    </location>
</feature>
<feature type="strand" evidence="4">
    <location>
        <begin position="214"/>
        <end position="222"/>
    </location>
</feature>
<feature type="helix" evidence="4">
    <location>
        <begin position="228"/>
        <end position="230"/>
    </location>
</feature>
<feature type="strand" evidence="4">
    <location>
        <begin position="232"/>
        <end position="236"/>
    </location>
</feature>
<feature type="strand" evidence="4">
    <location>
        <begin position="239"/>
        <end position="242"/>
    </location>
</feature>
<feature type="turn" evidence="4">
    <location>
        <begin position="244"/>
        <end position="246"/>
    </location>
</feature>
<feature type="turn" evidence="4">
    <location>
        <begin position="249"/>
        <end position="251"/>
    </location>
</feature>
<feature type="helix" evidence="4">
    <location>
        <begin position="254"/>
        <end position="256"/>
    </location>
</feature>
<feature type="strand" evidence="4">
    <location>
        <begin position="259"/>
        <end position="263"/>
    </location>
</feature>
<feature type="strand" evidence="4">
    <location>
        <begin position="274"/>
        <end position="276"/>
    </location>
</feature>
<feature type="helix" evidence="4">
    <location>
        <begin position="281"/>
        <end position="285"/>
    </location>
</feature>
<feature type="strand" evidence="4">
    <location>
        <begin position="288"/>
        <end position="291"/>
    </location>
</feature>
<feature type="strand" evidence="4">
    <location>
        <begin position="294"/>
        <end position="298"/>
    </location>
</feature>
<feature type="helix" evidence="4">
    <location>
        <begin position="302"/>
        <end position="310"/>
    </location>
</feature>
<feature type="strand" evidence="4">
    <location>
        <begin position="314"/>
        <end position="318"/>
    </location>
</feature>
<feature type="helix" evidence="4">
    <location>
        <begin position="323"/>
        <end position="326"/>
    </location>
</feature>
<feature type="turn" evidence="4">
    <location>
        <begin position="330"/>
        <end position="333"/>
    </location>
</feature>
<feature type="strand" evidence="4">
    <location>
        <begin position="335"/>
        <end position="340"/>
    </location>
</feature>
<evidence type="ECO:0000250" key="1"/>
<evidence type="ECO:0000269" key="2">
    <source>
    </source>
</evidence>
<evidence type="ECO:0000305" key="3"/>
<evidence type="ECO:0007829" key="4">
    <source>
        <dbReference type="PDB" id="1BWD"/>
    </source>
</evidence>
<name>STRB1_STRGR</name>
<organism>
    <name type="scientific">Streptomyces griseus</name>
    <dbReference type="NCBI Taxonomy" id="1911"/>
    <lineage>
        <taxon>Bacteria</taxon>
        <taxon>Bacillati</taxon>
        <taxon>Actinomycetota</taxon>
        <taxon>Actinomycetes</taxon>
        <taxon>Kitasatosporales</taxon>
        <taxon>Streptomycetaceae</taxon>
        <taxon>Streptomyces</taxon>
    </lineage>
</organism>